<dbReference type="EMBL" id="BC124909">
    <property type="protein sequence ID" value="AAI24910.1"/>
    <property type="molecule type" value="mRNA"/>
</dbReference>
<dbReference type="RefSeq" id="NP_001116356.1">
    <property type="nucleotide sequence ID" value="NM_001122884.1"/>
</dbReference>
<dbReference type="SMR" id="Q08B20"/>
<dbReference type="DNASU" id="733263"/>
<dbReference type="GeneID" id="733263"/>
<dbReference type="KEGG" id="xla:733263"/>
<dbReference type="AGR" id="Xenbase:XB-GENE-948656"/>
<dbReference type="CTD" id="733263"/>
<dbReference type="Xenbase" id="XB-GENE-948656">
    <property type="gene designation" value="odf2l.L"/>
</dbReference>
<dbReference type="OrthoDB" id="9948429at2759"/>
<dbReference type="Proteomes" id="UP000186698">
    <property type="component" value="Chromosome 4L"/>
</dbReference>
<dbReference type="Bgee" id="733263">
    <property type="expression patterns" value="Expressed in gastrula and 19 other cell types or tissues"/>
</dbReference>
<dbReference type="GO" id="GO:0034451">
    <property type="term" value="C:centriolar satellite"/>
    <property type="evidence" value="ECO:0000250"/>
    <property type="project" value="UniProtKB"/>
</dbReference>
<dbReference type="GO" id="GO:0005814">
    <property type="term" value="C:centriole"/>
    <property type="evidence" value="ECO:0007669"/>
    <property type="project" value="UniProtKB-SubCell"/>
</dbReference>
<dbReference type="GO" id="GO:0005813">
    <property type="term" value="C:centrosome"/>
    <property type="evidence" value="ECO:0000250"/>
    <property type="project" value="UniProtKB"/>
</dbReference>
<dbReference type="GO" id="GO:0036064">
    <property type="term" value="C:ciliary basal body"/>
    <property type="evidence" value="ECO:0000250"/>
    <property type="project" value="UniProtKB"/>
</dbReference>
<dbReference type="GO" id="GO:0005737">
    <property type="term" value="C:cytoplasm"/>
    <property type="evidence" value="ECO:0007669"/>
    <property type="project" value="UniProtKB-KW"/>
</dbReference>
<dbReference type="GO" id="GO:0030030">
    <property type="term" value="P:cell projection organization"/>
    <property type="evidence" value="ECO:0007669"/>
    <property type="project" value="UniProtKB-KW"/>
</dbReference>
<dbReference type="GO" id="GO:1902018">
    <property type="term" value="P:negative regulation of cilium assembly"/>
    <property type="evidence" value="ECO:0000250"/>
    <property type="project" value="UniProtKB"/>
</dbReference>
<dbReference type="InterPro" id="IPR026099">
    <property type="entry name" value="Odf2-rel"/>
</dbReference>
<dbReference type="PANTHER" id="PTHR23162">
    <property type="entry name" value="OUTER DENSE FIBER OF SPERM TAILS 2"/>
    <property type="match status" value="1"/>
</dbReference>
<dbReference type="PANTHER" id="PTHR23162:SF7">
    <property type="entry name" value="PROTEIN BCAP"/>
    <property type="match status" value="1"/>
</dbReference>
<gene>
    <name type="primary">odf2l</name>
    <name type="synonym">bcap</name>
</gene>
<name>ODF2L_XENLA</name>
<organism>
    <name type="scientific">Xenopus laevis</name>
    <name type="common">African clawed frog</name>
    <dbReference type="NCBI Taxonomy" id="8355"/>
    <lineage>
        <taxon>Eukaryota</taxon>
        <taxon>Metazoa</taxon>
        <taxon>Chordata</taxon>
        <taxon>Craniata</taxon>
        <taxon>Vertebrata</taxon>
        <taxon>Euteleostomi</taxon>
        <taxon>Amphibia</taxon>
        <taxon>Batrachia</taxon>
        <taxon>Anura</taxon>
        <taxon>Pipoidea</taxon>
        <taxon>Pipidae</taxon>
        <taxon>Xenopodinae</taxon>
        <taxon>Xenopus</taxon>
        <taxon>Xenopus</taxon>
    </lineage>
</organism>
<evidence type="ECO:0000250" key="1">
    <source>
        <dbReference type="UniProtKB" id="Q9ULJ1"/>
    </source>
</evidence>
<evidence type="ECO:0000255" key="2"/>
<evidence type="ECO:0000305" key="3"/>
<protein>
    <recommendedName>
        <fullName evidence="1">Protein BCAP</fullName>
    </recommendedName>
    <alternativeName>
        <fullName>Basal body centriole-associated protein</fullName>
    </alternativeName>
    <alternativeName>
        <fullName>Outer dense fiber protein 2-like</fullName>
    </alternativeName>
</protein>
<keyword id="KW-0966">Cell projection</keyword>
<keyword id="KW-0970">Cilium biogenesis/degradation</keyword>
<keyword id="KW-0175">Coiled coil</keyword>
<keyword id="KW-0963">Cytoplasm</keyword>
<keyword id="KW-0206">Cytoskeleton</keyword>
<keyword id="KW-1185">Reference proteome</keyword>
<reference key="1">
    <citation type="submission" date="2006-10" db="EMBL/GenBank/DDBJ databases">
        <authorList>
            <consortium name="NIH - Xenopus Gene Collection (XGC) project"/>
        </authorList>
    </citation>
    <scope>NUCLEOTIDE SEQUENCE [LARGE SCALE MRNA]</scope>
    <source>
        <tissue>Ovary</tissue>
    </source>
</reference>
<sequence length="641" mass="74208">MKTPTSTIQTNAATATHGNLVSTSNANFSEHMDERSSVLTQDTQEFLTDLLNRQKTRLNELSSHLSSMAHSETFLSSLKSSMHWPVEELTCDKVVTLLTKLKDTDVAANSVETLIEKLKDSSRGILRADNVSSLDAIDISKQNDLLWKELETFRHIRGILESFLQTHYSKSSRLINQESVEVLMGQLLEHEKDNLRLREQVVEKETKVEDLLHLIQQEKDTAVKSNQVSRSTEATHIRLQNLVKRKETENQQIVTQIQSLAAVISGRKLEIEDLRREITHLKEKQTFEKEGLKKAFRVQKQKVDNFQDVMENLNTQIKKKETELSEVHSSCSIWKDHHDSAVETKTRLEVQHESLTKQISDHLKLIKTMDEEREQSKEENAEKISAIILENAHFSEENVKLKASIAALESETVLVNSELLEVREKASQQKHFAEQYENQVQKLQEELNKLKEKFKDVLTKKKEILENKASENKKVDTNDYFLGNESFKLENNRIERKCEEIRIKLEKMIMHNEQLESKLKGQERDLQRSEVELEGKAKECSTLMRLLENAVEAGNKQISEENNKVLSKELALQRKLQSLESELKRKRAEHKQLGCTLNAFEKTHNLRLEEIRHSLEMTESRNKSIQSYVQFLKTSYAAMFE</sequence>
<proteinExistence type="evidence at transcript level"/>
<comment type="function">
    <text evidence="1">Acts as a suppressor of ciliogenesis, specifically, the initiation of ciliogenesis.</text>
</comment>
<comment type="subcellular location">
    <subcellularLocation>
        <location evidence="1">Cytoplasm</location>
        <location evidence="1">Cytoskeleton</location>
        <location evidence="1">Microtubule organizing center</location>
        <location evidence="1">Centrosome</location>
    </subcellularLocation>
    <subcellularLocation>
        <location evidence="1">Cytoplasm</location>
        <location evidence="1">Cytoskeleton</location>
        <location evidence="1">Microtubule organizing center</location>
        <location evidence="1">Centrosome</location>
        <location evidence="1">Centriole</location>
    </subcellularLocation>
    <subcellularLocation>
        <location evidence="1">Cytoplasm</location>
        <location evidence="1">Cytoskeleton</location>
        <location evidence="1">Microtubule organizing center</location>
        <location evidence="1">Centrosome</location>
        <location evidence="1">Centriolar satellite</location>
    </subcellularLocation>
    <subcellularLocation>
        <location evidence="1">Cytoplasm</location>
        <location evidence="1">Cytoskeleton</location>
        <location evidence="1">Cilium basal body</location>
    </subcellularLocation>
    <text evidence="1">Localizes to centrioles in proliferative cells and basal bodies in ciliated cells. Disappears during ciliogenesis but reappears, albeit at a lower levels once ciliogenesis has completed.</text>
</comment>
<comment type="similarity">
    <text evidence="3">Belongs to the ODF2 family.</text>
</comment>
<accession>Q08B20</accession>
<feature type="chain" id="PRO_0000308911" description="Protein BCAP">
    <location>
        <begin position="1"/>
        <end position="641"/>
    </location>
</feature>
<feature type="coiled-coil region" evidence="2">
    <location>
        <begin position="83"/>
        <end position="144"/>
    </location>
</feature>
<feature type="coiled-coil region" evidence="2">
    <location>
        <begin position="191"/>
        <end position="270"/>
    </location>
</feature>
<feature type="coiled-coil region" evidence="2">
    <location>
        <begin position="299"/>
        <end position="375"/>
    </location>
</feature>
<feature type="coiled-coil region" evidence="2">
    <location>
        <begin position="487"/>
        <end position="599"/>
    </location>
</feature>